<feature type="propeptide" id="PRO_0000015279">
    <location>
        <begin position="1"/>
        <end position="114"/>
    </location>
</feature>
<feature type="chain" id="PRO_0000015280" description="Interleukin-1 alpha">
    <location>
        <begin position="115"/>
        <end position="270"/>
    </location>
</feature>
<feature type="region of interest" description="Nuclear localization signal (NLS)" evidence="2">
    <location>
        <begin position="85"/>
        <end position="89"/>
    </location>
</feature>
<feature type="modified residue" description="N6-acetyllysine" evidence="2">
    <location>
        <position position="85"/>
    </location>
</feature>
<feature type="modified residue" description="Phosphoserine" evidence="1">
    <location>
        <position position="90"/>
    </location>
</feature>
<feature type="glycosylation site" description="N-linked (GlcNAc...) asparagine" evidence="3">
    <location>
        <position position="46"/>
    </location>
</feature>
<feature type="glycosylation site" description="N-linked (GlcNAc...) asparagine" evidence="3">
    <location>
        <position position="139"/>
    </location>
</feature>
<proteinExistence type="evidence at transcript level"/>
<protein>
    <recommendedName>
        <fullName>Interleukin-1 alpha</fullName>
        <shortName>IL-1 alpha</shortName>
    </recommendedName>
</protein>
<sequence>MAKVPDLFEDLKNCYSENEEYSSAIDHLSLNQKSFYDASYGSLHENCTDKFVSLRTSETSKMSTFTFKESRVVVSATSNKGKILKKRRLSFNQPFTEDDLEAIAHDLEETIQPRSAPHSFQNNLRYKLIRIVKQEFIMNDSLNQNIYVDMDRIHLKAASLNDLQLEVKFDMYAYSSGGDDSKYPVTLKVSNTQLFVSAQGEDKPVLLKEIPETPKLITGSETDLIFFWEKINSKNYFTSAAFPELLIATKEQSQVHLARGLPSMIDFQIS</sequence>
<organism>
    <name type="scientific">Rattus norvegicus</name>
    <name type="common">Rat</name>
    <dbReference type="NCBI Taxonomy" id="10116"/>
    <lineage>
        <taxon>Eukaryota</taxon>
        <taxon>Metazoa</taxon>
        <taxon>Chordata</taxon>
        <taxon>Craniata</taxon>
        <taxon>Vertebrata</taxon>
        <taxon>Euteleostomi</taxon>
        <taxon>Mammalia</taxon>
        <taxon>Eutheria</taxon>
        <taxon>Euarchontoglires</taxon>
        <taxon>Glires</taxon>
        <taxon>Rodentia</taxon>
        <taxon>Myomorpha</taxon>
        <taxon>Muroidea</taxon>
        <taxon>Muridae</taxon>
        <taxon>Murinae</taxon>
        <taxon>Rattus</taxon>
    </lineage>
</organism>
<comment type="function">
    <text evidence="2">Cytokine constitutively present intracellularly in nearly all resting non-hematopoietic cells that plays an important role in inflammation and bridges the innate and adaptive immune systems. After binding to its receptor IL1R1 together with its accessory protein IL1RAP, forms the high affinity interleukin-1 receptor complex. Signaling involves the recruitment of adapter molecules such as MYD88, IRAK1 or IRAK4. In turn, mediates the activation of NF-kappa-B and the three MAPK pathways p38, p42/p44 and JNK pathways. Within the cell, acts as an alarmin and cell death results in its liberation in the extracellular space after disruption of the cell membrane to induce inflammation and alert the host to injury or damage. In addition to its role as a danger signal, which occurs when the cytokine is passively released by cell necrosis, directly senses DNA damage and acts as signal for genotoxic stress without loss of cell integrity.</text>
</comment>
<comment type="subunit">
    <text evidence="2">Monomer. Interacts with TMED10; the interaction mediates the translocation from the cytoplasm into the ERGIC (endoplasmic reticulum-Golgi intermediate compartment) and thereby secretion. Interacts with IL1R1. Interacts with S100A13; this interaction is the first step in the export of IL1A, followed by direct translocation of this complex across the plasma membrane.</text>
</comment>
<comment type="subcellular location">
    <subcellularLocation>
        <location evidence="2">Nucleus</location>
    </subcellularLocation>
    <subcellularLocation>
        <location evidence="2">Cytoplasm</location>
    </subcellularLocation>
    <subcellularLocation>
        <location evidence="2">Secreted</location>
    </subcellularLocation>
    <text evidence="2">The lack of a specific hydrophobic segment in the precursor sequence suggests that IL-1 is released by damaged cells or is secreted by a mechanism differing from that used for other secretory proteins. The secretion is dependent on protein unfolding and facilitated by the cargo receptor TMED10; it results in protein translocation from the cytoplasm into the ERGIC (endoplasmic reticulum-Golgi intermediate compartment) followed by vesicle entry and secretion. Recruited to DNA damage sites and secreted after genotoxic stress.</text>
</comment>
<comment type="domain">
    <text>The similarity among the IL-1 precursors suggests that the amino ends of these proteins serve some as yet undefined function.</text>
</comment>
<comment type="PTM">
    <text evidence="2">Acetylated within its nuclear localization sequence, which impacts subcellular localization.</text>
</comment>
<comment type="PTM">
    <text evidence="2">Proteolytic processed by CAPN1 in a calcium-dependent manner. Cleavage from 31 kDa precursor to 18 kDa biologically active molecules.</text>
</comment>
<comment type="PTM">
    <text evidence="2">Phosphorylated. Phosphorylation greatly enhances susceptibility to digestion and promotes the conversion of pre-IL1A alpha to the biologically active IL1A.</text>
</comment>
<comment type="similarity">
    <text evidence="4">Belongs to the IL-1 family.</text>
</comment>
<gene>
    <name evidence="5" type="primary">Il1a</name>
</gene>
<keyword id="KW-0007">Acetylation</keyword>
<keyword id="KW-0202">Cytokine</keyword>
<keyword id="KW-0963">Cytoplasm</keyword>
<keyword id="KW-0325">Glycoprotein</keyword>
<keyword id="KW-0395">Inflammatory response</keyword>
<keyword id="KW-0497">Mitogen</keyword>
<keyword id="KW-0539">Nucleus</keyword>
<keyword id="KW-0597">Phosphoprotein</keyword>
<keyword id="KW-0666">Pyrogen</keyword>
<keyword id="KW-1185">Reference proteome</keyword>
<keyword id="KW-0964">Secreted</keyword>
<reference key="1">
    <citation type="journal article" date="1989" name="J. Biochem.">
        <title>Molecular cloning and expression of rat interleukin-1 alpha cDNA.</title>
        <authorList>
            <person name="Nishida T."/>
            <person name="Nishino N."/>
            <person name="Takano M."/>
            <person name="Sekiguchi Y."/>
            <person name="Kawai K."/>
            <person name="Mizuno K."/>
            <person name="Nakai S."/>
            <person name="Masui Y."/>
            <person name="Hirai Y."/>
        </authorList>
    </citation>
    <scope>NUCLEOTIDE SEQUENCE [MRNA]</scope>
</reference>
<reference key="2">
    <citation type="submission" date="1999-08" db="EMBL/GenBank/DDBJ databases">
        <title>Production of recombinant rat testis interleukin-1 alpha precursor form and discovery of a novel splice version lacking the calpain cleavage site.</title>
        <authorList>
            <person name="Sultana T."/>
            <person name="Svechnikov K."/>
            <person name="Weber G."/>
            <person name="Soeder O."/>
        </authorList>
    </citation>
    <scope>NUCLEOTIDE SEQUENCE [MRNA]</scope>
    <source>
        <strain>Sprague-Dawley</strain>
        <tissue>Testis</tissue>
    </source>
</reference>
<accession>P16598</accession>
<accession>Q546R9</accession>
<dbReference type="EMBL" id="D00403">
    <property type="protein sequence ID" value="BAA00306.1"/>
    <property type="molecule type" value="mRNA"/>
</dbReference>
<dbReference type="EMBL" id="AJ245642">
    <property type="protein sequence ID" value="CAC03995.1"/>
    <property type="molecule type" value="mRNA"/>
</dbReference>
<dbReference type="PIR" id="JX0064">
    <property type="entry name" value="JX0064"/>
</dbReference>
<dbReference type="RefSeq" id="NP_058715.1">
    <property type="nucleotide sequence ID" value="NM_017019.2"/>
</dbReference>
<dbReference type="RefSeq" id="XP_038960172.1">
    <property type="nucleotide sequence ID" value="XM_039104244.2"/>
</dbReference>
<dbReference type="SMR" id="P16598"/>
<dbReference type="FunCoup" id="P16598">
    <property type="interactions" value="332"/>
</dbReference>
<dbReference type="STRING" id="10116.ENSRNOP00000071252"/>
<dbReference type="BindingDB" id="P16598"/>
<dbReference type="GlyCosmos" id="P16598">
    <property type="glycosylation" value="2 sites, No reported glycans"/>
</dbReference>
<dbReference type="GlyGen" id="P16598">
    <property type="glycosylation" value="2 sites"/>
</dbReference>
<dbReference type="PhosphoSitePlus" id="P16598"/>
<dbReference type="PaxDb" id="10116-ENSRNOP00000006113"/>
<dbReference type="Ensembl" id="ENSRNOT00000006113.9">
    <property type="protein sequence ID" value="ENSRNOP00000006113.7"/>
    <property type="gene ID" value="ENSRNOG00000004575.9"/>
</dbReference>
<dbReference type="GeneID" id="24493"/>
<dbReference type="KEGG" id="rno:24493"/>
<dbReference type="UCSC" id="RGD:2890">
    <property type="organism name" value="rat"/>
</dbReference>
<dbReference type="AGR" id="RGD:2890"/>
<dbReference type="CTD" id="3552"/>
<dbReference type="RGD" id="2890">
    <property type="gene designation" value="Il1a"/>
</dbReference>
<dbReference type="eggNOG" id="ENOG502T3DD">
    <property type="taxonomic scope" value="Eukaryota"/>
</dbReference>
<dbReference type="GeneTree" id="ENSGT00390000013353"/>
<dbReference type="InParanoid" id="P16598"/>
<dbReference type="OMA" id="SNMKYNF"/>
<dbReference type="PhylomeDB" id="P16598"/>
<dbReference type="Reactome" id="R-RNO-448706">
    <property type="pathway name" value="Interleukin-1 processing"/>
</dbReference>
<dbReference type="Reactome" id="R-RNO-5620971">
    <property type="pathway name" value="Pyroptosis"/>
</dbReference>
<dbReference type="Reactome" id="R-RNO-9020702">
    <property type="pathway name" value="Interleukin-1 signaling"/>
</dbReference>
<dbReference type="PRO" id="PR:P16598"/>
<dbReference type="Proteomes" id="UP000002494">
    <property type="component" value="Chromosome 3"/>
</dbReference>
<dbReference type="GO" id="GO:0009986">
    <property type="term" value="C:cell surface"/>
    <property type="evidence" value="ECO:0000314"/>
    <property type="project" value="RGD"/>
</dbReference>
<dbReference type="GO" id="GO:0005829">
    <property type="term" value="C:cytosol"/>
    <property type="evidence" value="ECO:0000250"/>
    <property type="project" value="UniProtKB"/>
</dbReference>
<dbReference type="GO" id="GO:0005615">
    <property type="term" value="C:extracellular space"/>
    <property type="evidence" value="ECO:0000314"/>
    <property type="project" value="RGD"/>
</dbReference>
<dbReference type="GO" id="GO:0005634">
    <property type="term" value="C:nucleus"/>
    <property type="evidence" value="ECO:0007669"/>
    <property type="project" value="UniProtKB-SubCell"/>
</dbReference>
<dbReference type="GO" id="GO:0005507">
    <property type="term" value="F:copper ion binding"/>
    <property type="evidence" value="ECO:0000250"/>
    <property type="project" value="UniProtKB"/>
</dbReference>
<dbReference type="GO" id="GO:0005125">
    <property type="term" value="F:cytokine activity"/>
    <property type="evidence" value="ECO:0000266"/>
    <property type="project" value="RGD"/>
</dbReference>
<dbReference type="GO" id="GO:0005149">
    <property type="term" value="F:interleukin-1 receptor binding"/>
    <property type="evidence" value="ECO:0007669"/>
    <property type="project" value="InterPro"/>
</dbReference>
<dbReference type="GO" id="GO:0034605">
    <property type="term" value="P:cellular response to heat"/>
    <property type="evidence" value="ECO:0000250"/>
    <property type="project" value="UniProtKB"/>
</dbReference>
<dbReference type="GO" id="GO:0071222">
    <property type="term" value="P:cellular response to lipopolysaccharide"/>
    <property type="evidence" value="ECO:0000318"/>
    <property type="project" value="GO_Central"/>
</dbReference>
<dbReference type="GO" id="GO:0002248">
    <property type="term" value="P:connective tissue replacement involved in inflammatory response wound healing"/>
    <property type="evidence" value="ECO:0000266"/>
    <property type="project" value="RGD"/>
</dbReference>
<dbReference type="GO" id="GO:0019221">
    <property type="term" value="P:cytokine-mediated signaling pathway"/>
    <property type="evidence" value="ECO:0000266"/>
    <property type="project" value="RGD"/>
</dbReference>
<dbReference type="GO" id="GO:0035234">
    <property type="term" value="P:ectopic germ cell programmed cell death"/>
    <property type="evidence" value="ECO:0000266"/>
    <property type="project" value="RGD"/>
</dbReference>
<dbReference type="GO" id="GO:0097192">
    <property type="term" value="P:extrinsic apoptotic signaling pathway in absence of ligand"/>
    <property type="evidence" value="ECO:0000266"/>
    <property type="project" value="RGD"/>
</dbReference>
<dbReference type="GO" id="GO:0001660">
    <property type="term" value="P:fever generation"/>
    <property type="evidence" value="ECO:0007669"/>
    <property type="project" value="UniProtKB-KW"/>
</dbReference>
<dbReference type="GO" id="GO:0007507">
    <property type="term" value="P:heart development"/>
    <property type="evidence" value="ECO:0000270"/>
    <property type="project" value="RGD"/>
</dbReference>
<dbReference type="GO" id="GO:0006955">
    <property type="term" value="P:immune response"/>
    <property type="evidence" value="ECO:0000318"/>
    <property type="project" value="GO_Central"/>
</dbReference>
<dbReference type="GO" id="GO:0006954">
    <property type="term" value="P:inflammatory response"/>
    <property type="evidence" value="ECO:0000318"/>
    <property type="project" value="GO_Central"/>
</dbReference>
<dbReference type="GO" id="GO:0006883">
    <property type="term" value="P:intracellular sodium ion homeostasis"/>
    <property type="evidence" value="ECO:0000266"/>
    <property type="project" value="RGD"/>
</dbReference>
<dbReference type="GO" id="GO:0031424">
    <property type="term" value="P:keratinization"/>
    <property type="evidence" value="ECO:0000314"/>
    <property type="project" value="RGD"/>
</dbReference>
<dbReference type="GO" id="GO:0008285">
    <property type="term" value="P:negative regulation of cell population proliferation"/>
    <property type="evidence" value="ECO:0000266"/>
    <property type="project" value="RGD"/>
</dbReference>
<dbReference type="GO" id="GO:1904445">
    <property type="term" value="P:negative regulation of establishment of Sertoli cell barrier"/>
    <property type="evidence" value="ECO:0000314"/>
    <property type="project" value="RGD"/>
</dbReference>
<dbReference type="GO" id="GO:0045766">
    <property type="term" value="P:positive regulation of angiogenesis"/>
    <property type="evidence" value="ECO:0000266"/>
    <property type="project" value="RGD"/>
</dbReference>
<dbReference type="GO" id="GO:0043123">
    <property type="term" value="P:positive regulation of canonical NF-kappaB signal transduction"/>
    <property type="evidence" value="ECO:0000314"/>
    <property type="project" value="RGD"/>
</dbReference>
<dbReference type="GO" id="GO:0051781">
    <property type="term" value="P:positive regulation of cell division"/>
    <property type="evidence" value="ECO:0007669"/>
    <property type="project" value="UniProtKB-KW"/>
</dbReference>
<dbReference type="GO" id="GO:0001819">
    <property type="term" value="P:positive regulation of cytokine production"/>
    <property type="evidence" value="ECO:0000266"/>
    <property type="project" value="RGD"/>
</dbReference>
<dbReference type="GO" id="GO:0070374">
    <property type="term" value="P:positive regulation of ERK1 and ERK2 cascade"/>
    <property type="evidence" value="ECO:0000314"/>
    <property type="project" value="RGD"/>
</dbReference>
<dbReference type="GO" id="GO:0010628">
    <property type="term" value="P:positive regulation of gene expression"/>
    <property type="evidence" value="ECO:0000266"/>
    <property type="project" value="RGD"/>
</dbReference>
<dbReference type="GO" id="GO:0033092">
    <property type="term" value="P:positive regulation of immature T cell proliferation in thymus"/>
    <property type="evidence" value="ECO:0000318"/>
    <property type="project" value="GO_Central"/>
</dbReference>
<dbReference type="GO" id="GO:0032743">
    <property type="term" value="P:positive regulation of interleukin-2 production"/>
    <property type="evidence" value="ECO:0000315"/>
    <property type="project" value="ARUK-UCL"/>
</dbReference>
<dbReference type="GO" id="GO:0032755">
    <property type="term" value="P:positive regulation of interleukin-6 production"/>
    <property type="evidence" value="ECO:0000315"/>
    <property type="project" value="ARUK-UCL"/>
</dbReference>
<dbReference type="GO" id="GO:0046330">
    <property type="term" value="P:positive regulation of JNK cascade"/>
    <property type="evidence" value="ECO:0000314"/>
    <property type="project" value="RGD"/>
</dbReference>
<dbReference type="GO" id="GO:0045840">
    <property type="term" value="P:positive regulation of mitotic nuclear division"/>
    <property type="evidence" value="ECO:0000266"/>
    <property type="project" value="RGD"/>
</dbReference>
<dbReference type="GO" id="GO:1902624">
    <property type="term" value="P:positive regulation of neutrophil migration"/>
    <property type="evidence" value="ECO:0000315"/>
    <property type="project" value="RGD"/>
</dbReference>
<dbReference type="GO" id="GO:0032308">
    <property type="term" value="P:positive regulation of prostaglandin secretion"/>
    <property type="evidence" value="ECO:0000314"/>
    <property type="project" value="RGD"/>
</dbReference>
<dbReference type="GO" id="GO:0050714">
    <property type="term" value="P:positive regulation of protein secretion"/>
    <property type="evidence" value="ECO:0000266"/>
    <property type="project" value="RGD"/>
</dbReference>
<dbReference type="GO" id="GO:0010893">
    <property type="term" value="P:positive regulation of steroid biosynthetic process"/>
    <property type="evidence" value="ECO:0000314"/>
    <property type="project" value="RGD"/>
</dbReference>
<dbReference type="GO" id="GO:0032874">
    <property type="term" value="P:positive regulation of stress-activated MAPK cascade"/>
    <property type="evidence" value="ECO:0000314"/>
    <property type="project" value="RGD"/>
</dbReference>
<dbReference type="GO" id="GO:0045944">
    <property type="term" value="P:positive regulation of transcription by RNA polymerase II"/>
    <property type="evidence" value="ECO:0000266"/>
    <property type="project" value="RGD"/>
</dbReference>
<dbReference type="GO" id="GO:0032760">
    <property type="term" value="P:positive regulation of tumor necrosis factor production"/>
    <property type="evidence" value="ECO:0000315"/>
    <property type="project" value="ARUK-UCL"/>
</dbReference>
<dbReference type="GO" id="GO:0010575">
    <property type="term" value="P:positive regulation of vascular endothelial growth factor production"/>
    <property type="evidence" value="ECO:0000266"/>
    <property type="project" value="RGD"/>
</dbReference>
<dbReference type="GO" id="GO:0032956">
    <property type="term" value="P:regulation of actin cytoskeleton organization"/>
    <property type="evidence" value="ECO:0000314"/>
    <property type="project" value="RGD"/>
</dbReference>
<dbReference type="GO" id="GO:0070372">
    <property type="term" value="P:regulation of ERK1 and ERK2 cascade"/>
    <property type="evidence" value="ECO:0000318"/>
    <property type="project" value="GO_Central"/>
</dbReference>
<dbReference type="GO" id="GO:1901423">
    <property type="term" value="P:response to benzene"/>
    <property type="evidence" value="ECO:0000270"/>
    <property type="project" value="RGD"/>
</dbReference>
<dbReference type="GO" id="GO:0046688">
    <property type="term" value="P:response to copper ion"/>
    <property type="evidence" value="ECO:0000250"/>
    <property type="project" value="UniProtKB"/>
</dbReference>
<dbReference type="GO" id="GO:0010332">
    <property type="term" value="P:response to gamma radiation"/>
    <property type="evidence" value="ECO:0000270"/>
    <property type="project" value="RGD"/>
</dbReference>
<dbReference type="GO" id="GO:0001666">
    <property type="term" value="P:response to hypoxia"/>
    <property type="evidence" value="ECO:0000270"/>
    <property type="project" value="RGD"/>
</dbReference>
<dbReference type="GO" id="GO:0033591">
    <property type="term" value="P:response to L-ascorbic acid"/>
    <property type="evidence" value="ECO:0000270"/>
    <property type="project" value="RGD"/>
</dbReference>
<dbReference type="GO" id="GO:0032496">
    <property type="term" value="P:response to lipopolysaccharide"/>
    <property type="evidence" value="ECO:0000270"/>
    <property type="project" value="RGD"/>
</dbReference>
<dbReference type="GO" id="GO:0010193">
    <property type="term" value="P:response to ozone"/>
    <property type="evidence" value="ECO:0000270"/>
    <property type="project" value="RGD"/>
</dbReference>
<dbReference type="GO" id="GO:1902438">
    <property type="term" value="P:response to vanadate(3-)"/>
    <property type="evidence" value="ECO:0000270"/>
    <property type="project" value="RGD"/>
</dbReference>
<dbReference type="GO" id="GO:0007283">
    <property type="term" value="P:spermatogenesis"/>
    <property type="evidence" value="ECO:0000270"/>
    <property type="project" value="RGD"/>
</dbReference>
<dbReference type="CDD" id="cd23295">
    <property type="entry name" value="beta-trefoil_IL1A"/>
    <property type="match status" value="1"/>
</dbReference>
<dbReference type="Gene3D" id="2.80.10.50">
    <property type="match status" value="1"/>
</dbReference>
<dbReference type="InterPro" id="IPR003295">
    <property type="entry name" value="IL-1_alpha"/>
</dbReference>
<dbReference type="InterPro" id="IPR020877">
    <property type="entry name" value="IL-1_CS"/>
</dbReference>
<dbReference type="InterPro" id="IPR000975">
    <property type="entry name" value="IL-1_fam"/>
</dbReference>
<dbReference type="InterPro" id="IPR003502">
    <property type="entry name" value="IL-1_propep"/>
</dbReference>
<dbReference type="InterPro" id="IPR008996">
    <property type="entry name" value="IL1/FGF"/>
</dbReference>
<dbReference type="PANTHER" id="PTHR10078:SF33">
    <property type="entry name" value="INTERLEUKIN-1 ALPHA"/>
    <property type="match status" value="1"/>
</dbReference>
<dbReference type="PANTHER" id="PTHR10078">
    <property type="entry name" value="INTERLEUKIN-1 FAMILY MEMBER"/>
    <property type="match status" value="1"/>
</dbReference>
<dbReference type="Pfam" id="PF00340">
    <property type="entry name" value="IL1"/>
    <property type="match status" value="1"/>
</dbReference>
<dbReference type="Pfam" id="PF02394">
    <property type="entry name" value="IL1_propep"/>
    <property type="match status" value="1"/>
</dbReference>
<dbReference type="PRINTS" id="PR00264">
    <property type="entry name" value="INTERLEUKIN1"/>
</dbReference>
<dbReference type="PRINTS" id="PR01358">
    <property type="entry name" value="INTRLEUKIN1A"/>
</dbReference>
<dbReference type="PRINTS" id="PR01357">
    <property type="entry name" value="INTRLEUKN1AB"/>
</dbReference>
<dbReference type="SMART" id="SM00125">
    <property type="entry name" value="IL1"/>
    <property type="match status" value="1"/>
</dbReference>
<dbReference type="SUPFAM" id="SSF50353">
    <property type="entry name" value="Cytokine"/>
    <property type="match status" value="1"/>
</dbReference>
<dbReference type="PROSITE" id="PS00253">
    <property type="entry name" value="INTERLEUKIN_1"/>
    <property type="match status" value="1"/>
</dbReference>
<evidence type="ECO:0000250" key="1">
    <source>
        <dbReference type="UniProtKB" id="P01582"/>
    </source>
</evidence>
<evidence type="ECO:0000250" key="2">
    <source>
        <dbReference type="UniProtKB" id="P01583"/>
    </source>
</evidence>
<evidence type="ECO:0000255" key="3"/>
<evidence type="ECO:0000305" key="4"/>
<evidence type="ECO:0000312" key="5">
    <source>
        <dbReference type="RGD" id="2890"/>
    </source>
</evidence>
<name>IL1A_RAT</name>